<protein>
    <recommendedName>
        <fullName>Benzaldehyde lyase</fullName>
        <ecNumber>4.1.2.38</ecNumber>
    </recommendedName>
    <alternativeName>
        <fullName>Benzoin aldolase</fullName>
        <shortName>BL</shortName>
        <shortName>BZL</shortName>
    </alternativeName>
</protein>
<dbReference type="EC" id="4.1.2.38"/>
<dbReference type="EMBL" id="U04048">
    <property type="protein sequence ID" value="AAA50176.1"/>
    <property type="molecule type" value="Genomic_DNA"/>
</dbReference>
<dbReference type="PDB" id="2UZ1">
    <property type="method" value="X-ray"/>
    <property type="resolution" value="1.65 A"/>
    <property type="chains" value="B/C=1-563"/>
</dbReference>
<dbReference type="PDB" id="3D7K">
    <property type="method" value="X-ray"/>
    <property type="resolution" value="2.49 A"/>
    <property type="chains" value="A/B=1-562"/>
</dbReference>
<dbReference type="PDBsum" id="2UZ1"/>
<dbReference type="PDBsum" id="3D7K"/>
<dbReference type="SMR" id="P51853"/>
<dbReference type="BRENDA" id="4.1.2.38">
    <property type="organism ID" value="5121"/>
</dbReference>
<dbReference type="SABIO-RK" id="P51853"/>
<dbReference type="GO" id="GO:0005948">
    <property type="term" value="C:acetolactate synthase complex"/>
    <property type="evidence" value="ECO:0007669"/>
    <property type="project" value="TreeGrafter"/>
</dbReference>
<dbReference type="GO" id="GO:0003984">
    <property type="term" value="F:acetolactate synthase activity"/>
    <property type="evidence" value="ECO:0007669"/>
    <property type="project" value="TreeGrafter"/>
</dbReference>
<dbReference type="GO" id="GO:0047695">
    <property type="term" value="F:benzoin aldolase activity"/>
    <property type="evidence" value="ECO:0007669"/>
    <property type="project" value="UniProtKB-EC"/>
</dbReference>
<dbReference type="GO" id="GO:0050660">
    <property type="term" value="F:flavin adenine dinucleotide binding"/>
    <property type="evidence" value="ECO:0007669"/>
    <property type="project" value="TreeGrafter"/>
</dbReference>
<dbReference type="GO" id="GO:0000287">
    <property type="term" value="F:magnesium ion binding"/>
    <property type="evidence" value="ECO:0007669"/>
    <property type="project" value="InterPro"/>
</dbReference>
<dbReference type="GO" id="GO:0030976">
    <property type="term" value="F:thiamine pyrophosphate binding"/>
    <property type="evidence" value="ECO:0007669"/>
    <property type="project" value="InterPro"/>
</dbReference>
<dbReference type="GO" id="GO:0009097">
    <property type="term" value="P:isoleucine biosynthetic process"/>
    <property type="evidence" value="ECO:0007669"/>
    <property type="project" value="TreeGrafter"/>
</dbReference>
<dbReference type="GO" id="GO:0009099">
    <property type="term" value="P:L-valine biosynthetic process"/>
    <property type="evidence" value="ECO:0007669"/>
    <property type="project" value="TreeGrafter"/>
</dbReference>
<dbReference type="CDD" id="cd02004">
    <property type="entry name" value="TPP_BZL_OCoD_HPCL"/>
    <property type="match status" value="1"/>
</dbReference>
<dbReference type="CDD" id="cd07035">
    <property type="entry name" value="TPP_PYR_POX_like"/>
    <property type="match status" value="1"/>
</dbReference>
<dbReference type="Gene3D" id="3.40.50.970">
    <property type="match status" value="2"/>
</dbReference>
<dbReference type="Gene3D" id="3.40.50.1220">
    <property type="entry name" value="TPP-binding domain"/>
    <property type="match status" value="1"/>
</dbReference>
<dbReference type="InterPro" id="IPR029035">
    <property type="entry name" value="DHS-like_NAD/FAD-binding_dom"/>
</dbReference>
<dbReference type="InterPro" id="IPR029061">
    <property type="entry name" value="THDP-binding"/>
</dbReference>
<dbReference type="InterPro" id="IPR012000">
    <property type="entry name" value="Thiamin_PyroP_enz_cen_dom"/>
</dbReference>
<dbReference type="InterPro" id="IPR012001">
    <property type="entry name" value="Thiamin_PyroP_enz_TPP-bd_dom"/>
</dbReference>
<dbReference type="InterPro" id="IPR045229">
    <property type="entry name" value="TPP_enz"/>
</dbReference>
<dbReference type="InterPro" id="IPR011766">
    <property type="entry name" value="TPP_enzyme_TPP-bd"/>
</dbReference>
<dbReference type="PANTHER" id="PTHR18968:SF166">
    <property type="entry name" value="2-HYDROXYACYL-COA LYASE 2"/>
    <property type="match status" value="1"/>
</dbReference>
<dbReference type="PANTHER" id="PTHR18968">
    <property type="entry name" value="THIAMINE PYROPHOSPHATE ENZYMES"/>
    <property type="match status" value="1"/>
</dbReference>
<dbReference type="Pfam" id="PF02775">
    <property type="entry name" value="TPP_enzyme_C"/>
    <property type="match status" value="1"/>
</dbReference>
<dbReference type="Pfam" id="PF00205">
    <property type="entry name" value="TPP_enzyme_M"/>
    <property type="match status" value="1"/>
</dbReference>
<dbReference type="Pfam" id="PF02776">
    <property type="entry name" value="TPP_enzyme_N"/>
    <property type="match status" value="1"/>
</dbReference>
<dbReference type="SUPFAM" id="SSF52467">
    <property type="entry name" value="DHS-like NAD/FAD-binding domain"/>
    <property type="match status" value="1"/>
</dbReference>
<dbReference type="SUPFAM" id="SSF52518">
    <property type="entry name" value="Thiamin diphosphate-binding fold (THDP-binding)"/>
    <property type="match status" value="2"/>
</dbReference>
<gene>
    <name type="primary">bznB</name>
</gene>
<accession>P51853</accession>
<keyword id="KW-0002">3D-structure</keyword>
<keyword id="KW-0456">Lyase</keyword>
<keyword id="KW-0786">Thiamine pyrophosphate</keyword>
<feature type="chain" id="PRO_0000090827" description="Benzaldehyde lyase">
    <location>
        <begin position="1"/>
        <end position="563"/>
    </location>
</feature>
<organism>
    <name type="scientific">Pseudomonas fluorescens</name>
    <dbReference type="NCBI Taxonomy" id="294"/>
    <lineage>
        <taxon>Bacteria</taxon>
        <taxon>Pseudomonadati</taxon>
        <taxon>Pseudomonadota</taxon>
        <taxon>Gammaproteobacteria</taxon>
        <taxon>Pseudomonadales</taxon>
        <taxon>Pseudomonadaceae</taxon>
        <taxon>Pseudomonas</taxon>
    </lineage>
</organism>
<evidence type="ECO:0000305" key="1"/>
<reference key="1">
    <citation type="journal article" date="1994" name="Gene">
        <title>Cloning and sequencing of the gene encoding benzaldehyde lyase from Pseudomonas fluorescens biovar I.</title>
        <authorList>
            <person name="Hinrichsen P."/>
            <person name="Gomez I."/>
            <person name="Vicuna R."/>
        </authorList>
    </citation>
    <scope>NUCLEOTIDE SEQUENCE [GENOMIC DNA]</scope>
    <source>
        <strain>Biovar I</strain>
    </source>
</reference>
<comment type="function">
    <text>Cleavage of benzoin-anisoin acyloin linkage.</text>
</comment>
<comment type="catalytic activity">
    <reaction>
        <text>benzoin = 2 benzaldehyde</text>
        <dbReference type="Rhea" id="RHEA:21460"/>
        <dbReference type="ChEBI" id="CHEBI:17169"/>
        <dbReference type="ChEBI" id="CHEBI:17682"/>
        <dbReference type="EC" id="4.1.2.38"/>
    </reaction>
</comment>
<comment type="cofactor">
    <cofactor>
        <name>a metal cation</name>
        <dbReference type="ChEBI" id="CHEBI:25213"/>
    </cofactor>
    <text>Binds 1 metal ion per subunit.</text>
</comment>
<comment type="cofactor">
    <cofactor>
        <name>thiamine diphosphate</name>
        <dbReference type="ChEBI" id="CHEBI:58937"/>
    </cofactor>
    <text>Binds 1 thiamine pyrophosphate per subunit.</text>
</comment>
<comment type="similarity">
    <text evidence="1">Belongs to the TPP enzyme family.</text>
</comment>
<name>BZNB_PSEFL</name>
<proteinExistence type="evidence at protein level"/>
<sequence length="563" mass="58957">MAMITGGELVVRTLIKAGVEHLFGLHGAHIDTIFQACLDHDVPIIDTRHEAAAGHAAEGYARAGAKLGVAGHGGRGIYQCGHAHCQRLAGSQGRCIPHPGSGALRDDETNTLQAGIDQVAMAAPITKWAHRVMATEHIPRLVMQAIRAALSAPRGPVLLDLPWDILMNQIDEDSVIIPDLVLSAHGARPDPADLDQALALLRKAERPVIVLGSEASRTARKTALSAFVAATGVPVFADYEGLSMLSGLPDAMRGGLVQNLYSFAKADAAPDLVLMLGARFGLNTGHGSGQLIPHSAQVIQVDPDACELGRLQGIALGIVADVGGTIEALAQATAQDAAWPDRGDWCAKVTDLAQERYASIAAKSSSEHALHPFHASQVIAKHVDAGVTVVADGALTYLWLSEVMSRVKPGGFLCHGYLGSMGVGFGTALGAQVADLEAGRRTILVTGDGSVGYSIGEFDTLVRKQLPLIVIIMNNQSWGATLHFQQLAVGPNRVTGTRLENGSYHGVAAAFGADGYHVDSVESFSAALAQALAHNRPACINVAVALDPIPPEELILIGMDPFA</sequence>